<comment type="function">
    <text evidence="1">Required for the assembly and/or stability of the 40S ribosomal subunit. Required for the processing of the 20S rRNA-precursor to mature 18S rRNA in a late step of the maturation of 40S ribosomal subunits.</text>
</comment>
<comment type="subunit">
    <text evidence="1">Component of the small ribosomal subunit. Mature ribosomes consist of a small (40S) and a large (60S) subunit. The 40S subunit contains about 33 different proteins and 1 molecule of RNA (18S). The 60S subunit contains about 49 different proteins and 3 molecules of RNA (25S, 5.8S and 5S). Interacts with rps21.</text>
</comment>
<comment type="subcellular location">
    <subcellularLocation>
        <location evidence="1">Cytoplasm</location>
    </subcellularLocation>
</comment>
<comment type="similarity">
    <text evidence="1">Belongs to the universal ribosomal protein uS2 family.</text>
</comment>
<proteinExistence type="inferred from homology"/>
<feature type="chain" id="PRO_0000389291" description="Small ribosomal subunit protein uS2">
    <location>
        <begin position="1"/>
        <end position="290"/>
    </location>
</feature>
<feature type="region of interest" description="Disordered" evidence="2">
    <location>
        <begin position="263"/>
        <end position="290"/>
    </location>
</feature>
<feature type="compositionally biased region" description="Low complexity" evidence="2">
    <location>
        <begin position="263"/>
        <end position="282"/>
    </location>
</feature>
<protein>
    <recommendedName>
        <fullName evidence="1">Small ribosomal subunit protein uS2</fullName>
    </recommendedName>
    <alternativeName>
        <fullName evidence="3">40S ribosomal protein S0</fullName>
    </alternativeName>
</protein>
<accession>B8M6L1</accession>
<sequence>MAPSNLPPVFNATSQDIEMLLAAQCHLGSKNLQVHMEPYLWKTRPDGINVINIGKTWEKIVLAARIIAAIDNPADVAVISARPYGQRAVLKFASHTGATAIAGRFTPGNFTNYITRSFKEPRLIIVTDPRTDAQAIKEASYVNIPVIALCDTDSPTEFVDVAIPTNNKGRHAIGLVWWLLAREVLRLRGTLATRETEWDVVVDLYFYRDPEAEETKEIADESKVPGAEEVGPAAIETGYVGDSWDAAAPGAAAPGSAFAAASATAGATWEAEAGGDWAAESAQPNPETKW</sequence>
<organism>
    <name type="scientific">Talaromyces stipitatus (strain ATCC 10500 / CBS 375.48 / QM 6759 / NRRL 1006)</name>
    <name type="common">Penicillium stipitatum</name>
    <dbReference type="NCBI Taxonomy" id="441959"/>
    <lineage>
        <taxon>Eukaryota</taxon>
        <taxon>Fungi</taxon>
        <taxon>Dikarya</taxon>
        <taxon>Ascomycota</taxon>
        <taxon>Pezizomycotina</taxon>
        <taxon>Eurotiomycetes</taxon>
        <taxon>Eurotiomycetidae</taxon>
        <taxon>Eurotiales</taxon>
        <taxon>Trichocomaceae</taxon>
        <taxon>Talaromyces</taxon>
        <taxon>Talaromyces sect. Talaromyces</taxon>
    </lineage>
</organism>
<dbReference type="EMBL" id="EQ962654">
    <property type="protein sequence ID" value="EED19473.1"/>
    <property type="molecule type" value="Genomic_DNA"/>
</dbReference>
<dbReference type="RefSeq" id="XP_002479907.1">
    <property type="nucleotide sequence ID" value="XM_002479862.1"/>
</dbReference>
<dbReference type="SMR" id="B8M6L1"/>
<dbReference type="FunCoup" id="B8M6L1">
    <property type="interactions" value="1265"/>
</dbReference>
<dbReference type="STRING" id="441959.B8M6L1"/>
<dbReference type="GeneID" id="8109686"/>
<dbReference type="VEuPathDB" id="FungiDB:TSTA_027670"/>
<dbReference type="eggNOG" id="KOG0830">
    <property type="taxonomic scope" value="Eukaryota"/>
</dbReference>
<dbReference type="HOGENOM" id="CLU_058171_0_1_1"/>
<dbReference type="InParanoid" id="B8M6L1"/>
<dbReference type="OMA" id="VKNFFEP"/>
<dbReference type="OrthoDB" id="414863at2759"/>
<dbReference type="PhylomeDB" id="B8M6L1"/>
<dbReference type="Proteomes" id="UP000001745">
    <property type="component" value="Unassembled WGS sequence"/>
</dbReference>
<dbReference type="GO" id="GO:0022627">
    <property type="term" value="C:cytosolic small ribosomal subunit"/>
    <property type="evidence" value="ECO:0007669"/>
    <property type="project" value="UniProtKB-UniRule"/>
</dbReference>
<dbReference type="GO" id="GO:0003735">
    <property type="term" value="F:structural constituent of ribosome"/>
    <property type="evidence" value="ECO:0007669"/>
    <property type="project" value="UniProtKB-UniRule"/>
</dbReference>
<dbReference type="GO" id="GO:0000028">
    <property type="term" value="P:ribosomal small subunit assembly"/>
    <property type="evidence" value="ECO:0007669"/>
    <property type="project" value="UniProtKB-UniRule"/>
</dbReference>
<dbReference type="GO" id="GO:0006412">
    <property type="term" value="P:translation"/>
    <property type="evidence" value="ECO:0007669"/>
    <property type="project" value="UniProtKB-UniRule"/>
</dbReference>
<dbReference type="CDD" id="cd01425">
    <property type="entry name" value="RPS2"/>
    <property type="match status" value="1"/>
</dbReference>
<dbReference type="FunFam" id="3.40.50.10490:FF:000010">
    <property type="entry name" value="40S ribosomal protein S0"/>
    <property type="match status" value="1"/>
</dbReference>
<dbReference type="Gene3D" id="3.40.50.10490">
    <property type="entry name" value="Glucose-6-phosphate isomerase like protein, domain 1"/>
    <property type="match status" value="1"/>
</dbReference>
<dbReference type="HAMAP" id="MF_03015">
    <property type="entry name" value="Ribosomal_S2_euk"/>
    <property type="match status" value="1"/>
</dbReference>
<dbReference type="InterPro" id="IPR001865">
    <property type="entry name" value="Ribosomal_uS2"/>
</dbReference>
<dbReference type="InterPro" id="IPR032281">
    <property type="entry name" value="Ribosomal_uS2_C"/>
</dbReference>
<dbReference type="InterPro" id="IPR018130">
    <property type="entry name" value="Ribosomal_uS2_CS"/>
</dbReference>
<dbReference type="InterPro" id="IPR027498">
    <property type="entry name" value="Ribosomal_uS2_euk"/>
</dbReference>
<dbReference type="InterPro" id="IPR005707">
    <property type="entry name" value="Ribosomal_uS2_euk/arc"/>
</dbReference>
<dbReference type="InterPro" id="IPR023591">
    <property type="entry name" value="Ribosomal_uS2_flav_dom_sf"/>
</dbReference>
<dbReference type="NCBIfam" id="TIGR01012">
    <property type="entry name" value="uS2_euk_arch"/>
    <property type="match status" value="1"/>
</dbReference>
<dbReference type="PANTHER" id="PTHR11489">
    <property type="entry name" value="40S RIBOSOMAL PROTEIN SA"/>
    <property type="match status" value="1"/>
</dbReference>
<dbReference type="Pfam" id="PF16122">
    <property type="entry name" value="40S_SA_C"/>
    <property type="match status" value="1"/>
</dbReference>
<dbReference type="Pfam" id="PF00318">
    <property type="entry name" value="Ribosomal_S2"/>
    <property type="match status" value="2"/>
</dbReference>
<dbReference type="PRINTS" id="PR00395">
    <property type="entry name" value="RIBOSOMALS2"/>
</dbReference>
<dbReference type="SUPFAM" id="SSF52313">
    <property type="entry name" value="Ribosomal protein S2"/>
    <property type="match status" value="1"/>
</dbReference>
<dbReference type="PROSITE" id="PS00963">
    <property type="entry name" value="RIBOSOMAL_S2_2"/>
    <property type="match status" value="1"/>
</dbReference>
<reference key="1">
    <citation type="journal article" date="2015" name="Genome Announc.">
        <title>Genome sequence of the AIDS-associated pathogen Penicillium marneffei (ATCC18224) and its near taxonomic relative Talaromyces stipitatus (ATCC10500).</title>
        <authorList>
            <person name="Nierman W.C."/>
            <person name="Fedorova-Abrams N.D."/>
            <person name="Andrianopoulos A."/>
        </authorList>
    </citation>
    <scope>NUCLEOTIDE SEQUENCE [LARGE SCALE GENOMIC DNA]</scope>
    <source>
        <strain>ATCC 10500 / CBS 375.48 / QM 6759 / NRRL 1006</strain>
    </source>
</reference>
<gene>
    <name type="primary">rps0</name>
    <name type="ORF">TSTA_027670</name>
</gene>
<name>RSSA_TALSN</name>
<evidence type="ECO:0000255" key="1">
    <source>
        <dbReference type="HAMAP-Rule" id="MF_03015"/>
    </source>
</evidence>
<evidence type="ECO:0000256" key="2">
    <source>
        <dbReference type="SAM" id="MobiDB-lite"/>
    </source>
</evidence>
<evidence type="ECO:0000305" key="3"/>
<keyword id="KW-0963">Cytoplasm</keyword>
<keyword id="KW-1185">Reference proteome</keyword>
<keyword id="KW-0687">Ribonucleoprotein</keyword>
<keyword id="KW-0689">Ribosomal protein</keyword>